<protein>
    <recommendedName>
        <fullName evidence="1">Phosphate import ATP-binding protein PstB</fullName>
        <ecNumber evidence="1">7.3.2.1</ecNumber>
    </recommendedName>
    <alternativeName>
        <fullName evidence="1">ABC phosphate transporter</fullName>
    </alternativeName>
    <alternativeName>
        <fullName evidence="1">Phosphate-transporting ATPase</fullName>
    </alternativeName>
</protein>
<reference key="1">
    <citation type="submission" date="2006-03" db="EMBL/GenBank/DDBJ databases">
        <title>Complete sequence of chromosome of Nitrobacter hamburgensis X14.</title>
        <authorList>
            <consortium name="US DOE Joint Genome Institute"/>
            <person name="Copeland A."/>
            <person name="Lucas S."/>
            <person name="Lapidus A."/>
            <person name="Barry K."/>
            <person name="Detter J.C."/>
            <person name="Glavina del Rio T."/>
            <person name="Hammon N."/>
            <person name="Israni S."/>
            <person name="Dalin E."/>
            <person name="Tice H."/>
            <person name="Pitluck S."/>
            <person name="Chain P."/>
            <person name="Malfatti S."/>
            <person name="Shin M."/>
            <person name="Vergez L."/>
            <person name="Schmutz J."/>
            <person name="Larimer F."/>
            <person name="Land M."/>
            <person name="Hauser L."/>
            <person name="Kyrpides N."/>
            <person name="Ivanova N."/>
            <person name="Ward B."/>
            <person name="Arp D."/>
            <person name="Klotz M."/>
            <person name="Stein L."/>
            <person name="O'Mullan G."/>
            <person name="Starkenburg S."/>
            <person name="Sayavedra L."/>
            <person name="Poret-Peterson A.T."/>
            <person name="Gentry M.E."/>
            <person name="Bruce D."/>
            <person name="Richardson P."/>
        </authorList>
    </citation>
    <scope>NUCLEOTIDE SEQUENCE [LARGE SCALE GENOMIC DNA]</scope>
    <source>
        <strain>DSM 10229 / NCIMB 13809 / X14</strain>
    </source>
</reference>
<proteinExistence type="inferred from homology"/>
<comment type="function">
    <text evidence="1">Part of the ABC transporter complex PstSACB involved in phosphate import. Responsible for energy coupling to the transport system.</text>
</comment>
<comment type="catalytic activity">
    <reaction evidence="1">
        <text>phosphate(out) + ATP + H2O = ADP + 2 phosphate(in) + H(+)</text>
        <dbReference type="Rhea" id="RHEA:24440"/>
        <dbReference type="ChEBI" id="CHEBI:15377"/>
        <dbReference type="ChEBI" id="CHEBI:15378"/>
        <dbReference type="ChEBI" id="CHEBI:30616"/>
        <dbReference type="ChEBI" id="CHEBI:43474"/>
        <dbReference type="ChEBI" id="CHEBI:456216"/>
        <dbReference type="EC" id="7.3.2.1"/>
    </reaction>
</comment>
<comment type="subunit">
    <text evidence="1">The complex is composed of two ATP-binding proteins (PstB), two transmembrane proteins (PstC and PstA) and a solute-binding protein (PstS).</text>
</comment>
<comment type="subcellular location">
    <subcellularLocation>
        <location evidence="1">Cell inner membrane</location>
        <topology evidence="1">Peripheral membrane protein</topology>
    </subcellularLocation>
</comment>
<comment type="similarity">
    <text evidence="1">Belongs to the ABC transporter superfamily. Phosphate importer (TC 3.A.1.7) family.</text>
</comment>
<dbReference type="EC" id="7.3.2.1" evidence="1"/>
<dbReference type="EMBL" id="CP000319">
    <property type="protein sequence ID" value="ABE61526.1"/>
    <property type="molecule type" value="Genomic_DNA"/>
</dbReference>
<dbReference type="RefSeq" id="WP_011509230.1">
    <property type="nucleotide sequence ID" value="NC_007964.1"/>
</dbReference>
<dbReference type="SMR" id="Q1QQH1"/>
<dbReference type="STRING" id="323097.Nham_0638"/>
<dbReference type="KEGG" id="nha:Nham_0638"/>
<dbReference type="eggNOG" id="COG1117">
    <property type="taxonomic scope" value="Bacteria"/>
</dbReference>
<dbReference type="HOGENOM" id="CLU_000604_1_22_5"/>
<dbReference type="OrthoDB" id="9802264at2"/>
<dbReference type="Proteomes" id="UP000001953">
    <property type="component" value="Chromosome"/>
</dbReference>
<dbReference type="GO" id="GO:0005886">
    <property type="term" value="C:plasma membrane"/>
    <property type="evidence" value="ECO:0007669"/>
    <property type="project" value="UniProtKB-SubCell"/>
</dbReference>
<dbReference type="GO" id="GO:0005524">
    <property type="term" value="F:ATP binding"/>
    <property type="evidence" value="ECO:0007669"/>
    <property type="project" value="UniProtKB-KW"/>
</dbReference>
<dbReference type="GO" id="GO:0016887">
    <property type="term" value="F:ATP hydrolysis activity"/>
    <property type="evidence" value="ECO:0007669"/>
    <property type="project" value="InterPro"/>
</dbReference>
<dbReference type="GO" id="GO:0015415">
    <property type="term" value="F:ATPase-coupled phosphate ion transmembrane transporter activity"/>
    <property type="evidence" value="ECO:0007669"/>
    <property type="project" value="UniProtKB-EC"/>
</dbReference>
<dbReference type="GO" id="GO:0035435">
    <property type="term" value="P:phosphate ion transmembrane transport"/>
    <property type="evidence" value="ECO:0007669"/>
    <property type="project" value="InterPro"/>
</dbReference>
<dbReference type="CDD" id="cd03260">
    <property type="entry name" value="ABC_PstB_phosphate_transporter"/>
    <property type="match status" value="1"/>
</dbReference>
<dbReference type="FunFam" id="3.40.50.300:FF:000132">
    <property type="entry name" value="Phosphate import ATP-binding protein PstB"/>
    <property type="match status" value="1"/>
</dbReference>
<dbReference type="Gene3D" id="3.40.50.300">
    <property type="entry name" value="P-loop containing nucleotide triphosphate hydrolases"/>
    <property type="match status" value="1"/>
</dbReference>
<dbReference type="InterPro" id="IPR003593">
    <property type="entry name" value="AAA+_ATPase"/>
</dbReference>
<dbReference type="InterPro" id="IPR003439">
    <property type="entry name" value="ABC_transporter-like_ATP-bd"/>
</dbReference>
<dbReference type="InterPro" id="IPR017871">
    <property type="entry name" value="ABC_transporter-like_CS"/>
</dbReference>
<dbReference type="InterPro" id="IPR027417">
    <property type="entry name" value="P-loop_NTPase"/>
</dbReference>
<dbReference type="InterPro" id="IPR005670">
    <property type="entry name" value="PstB-like"/>
</dbReference>
<dbReference type="NCBIfam" id="TIGR00972">
    <property type="entry name" value="3a0107s01c2"/>
    <property type="match status" value="1"/>
</dbReference>
<dbReference type="PANTHER" id="PTHR43423">
    <property type="entry name" value="ABC TRANSPORTER I FAMILY MEMBER 17"/>
    <property type="match status" value="1"/>
</dbReference>
<dbReference type="PANTHER" id="PTHR43423:SF3">
    <property type="entry name" value="PHOSPHATE IMPORT ATP-BINDING PROTEIN PSTB"/>
    <property type="match status" value="1"/>
</dbReference>
<dbReference type="Pfam" id="PF00005">
    <property type="entry name" value="ABC_tran"/>
    <property type="match status" value="1"/>
</dbReference>
<dbReference type="SMART" id="SM00382">
    <property type="entry name" value="AAA"/>
    <property type="match status" value="1"/>
</dbReference>
<dbReference type="SUPFAM" id="SSF52540">
    <property type="entry name" value="P-loop containing nucleoside triphosphate hydrolases"/>
    <property type="match status" value="1"/>
</dbReference>
<dbReference type="PROSITE" id="PS00211">
    <property type="entry name" value="ABC_TRANSPORTER_1"/>
    <property type="match status" value="1"/>
</dbReference>
<dbReference type="PROSITE" id="PS50893">
    <property type="entry name" value="ABC_TRANSPORTER_2"/>
    <property type="match status" value="1"/>
</dbReference>
<dbReference type="PROSITE" id="PS51238">
    <property type="entry name" value="PSTB"/>
    <property type="match status" value="1"/>
</dbReference>
<accession>Q1QQH1</accession>
<name>PSTB_NITHX</name>
<feature type="chain" id="PRO_0000272482" description="Phosphate import ATP-binding protein PstB">
    <location>
        <begin position="1"/>
        <end position="272"/>
    </location>
</feature>
<feature type="domain" description="ABC transporter" evidence="1">
    <location>
        <begin position="26"/>
        <end position="267"/>
    </location>
</feature>
<feature type="binding site" evidence="1">
    <location>
        <begin position="58"/>
        <end position="65"/>
    </location>
    <ligand>
        <name>ATP</name>
        <dbReference type="ChEBI" id="CHEBI:30616"/>
    </ligand>
</feature>
<keyword id="KW-0067">ATP-binding</keyword>
<keyword id="KW-0997">Cell inner membrane</keyword>
<keyword id="KW-1003">Cell membrane</keyword>
<keyword id="KW-0472">Membrane</keyword>
<keyword id="KW-0547">Nucleotide-binding</keyword>
<keyword id="KW-0592">Phosphate transport</keyword>
<keyword id="KW-1185">Reference proteome</keyword>
<keyword id="KW-1278">Translocase</keyword>
<keyword id="KW-0813">Transport</keyword>
<sequence>MTDVSAAASRPAVPPSVIDPDAPAKVAARNLNFYYGQHQALKNINLSIAANRVTAFIGPSGCGKSTLLRVFNRMYDLYPGQRVEGQVLLDNTDILDPRLDLNLLRARVGMVFQKPTPFPMTIYENIAFGIRLYEKLSKSEMDDRVEKALQGGALWNEVKDKLNASGLSLSGGQQQRLCIARTVALRPEVILFDEPCSALDPISTAKIEGLIDELKEHYTIAIVTHNMQQAARVSDTTAFMYLGEMVEFGPTNKVFTSPADRRTQDYITGRFG</sequence>
<gene>
    <name evidence="1" type="primary">pstB</name>
    <name type="ordered locus">Nham_0638</name>
</gene>
<evidence type="ECO:0000255" key="1">
    <source>
        <dbReference type="HAMAP-Rule" id="MF_01702"/>
    </source>
</evidence>
<organism>
    <name type="scientific">Nitrobacter hamburgensis (strain DSM 10229 / NCIMB 13809 / X14)</name>
    <dbReference type="NCBI Taxonomy" id="323097"/>
    <lineage>
        <taxon>Bacteria</taxon>
        <taxon>Pseudomonadati</taxon>
        <taxon>Pseudomonadota</taxon>
        <taxon>Alphaproteobacteria</taxon>
        <taxon>Hyphomicrobiales</taxon>
        <taxon>Nitrobacteraceae</taxon>
        <taxon>Nitrobacter</taxon>
    </lineage>
</organism>